<dbReference type="EMBL" id="CP000419">
    <property type="protein sequence ID" value="ABJ66462.1"/>
    <property type="molecule type" value="Genomic_DNA"/>
</dbReference>
<dbReference type="RefSeq" id="WP_011681323.1">
    <property type="nucleotide sequence ID" value="NC_008532.1"/>
</dbReference>
<dbReference type="SMR" id="Q03K10"/>
<dbReference type="KEGG" id="ste:STER_1280"/>
<dbReference type="HOGENOM" id="CLU_014841_3_2_9"/>
<dbReference type="GO" id="GO:0005737">
    <property type="term" value="C:cytoplasm"/>
    <property type="evidence" value="ECO:0007669"/>
    <property type="project" value="UniProtKB-SubCell"/>
</dbReference>
<dbReference type="GO" id="GO:0009380">
    <property type="term" value="C:excinuclease repair complex"/>
    <property type="evidence" value="ECO:0007669"/>
    <property type="project" value="InterPro"/>
</dbReference>
<dbReference type="GO" id="GO:0003677">
    <property type="term" value="F:DNA binding"/>
    <property type="evidence" value="ECO:0007669"/>
    <property type="project" value="UniProtKB-UniRule"/>
</dbReference>
<dbReference type="GO" id="GO:0009381">
    <property type="term" value="F:excinuclease ABC activity"/>
    <property type="evidence" value="ECO:0007669"/>
    <property type="project" value="UniProtKB-UniRule"/>
</dbReference>
<dbReference type="GO" id="GO:0006289">
    <property type="term" value="P:nucleotide-excision repair"/>
    <property type="evidence" value="ECO:0007669"/>
    <property type="project" value="UniProtKB-UniRule"/>
</dbReference>
<dbReference type="GO" id="GO:0009432">
    <property type="term" value="P:SOS response"/>
    <property type="evidence" value="ECO:0007669"/>
    <property type="project" value="UniProtKB-UniRule"/>
</dbReference>
<dbReference type="CDD" id="cd10434">
    <property type="entry name" value="GIY-YIG_UvrC_Cho"/>
    <property type="match status" value="1"/>
</dbReference>
<dbReference type="FunFam" id="3.30.420.340:FF:000002">
    <property type="entry name" value="UvrABC system protein C"/>
    <property type="match status" value="1"/>
</dbReference>
<dbReference type="FunFam" id="3.40.1440.10:FF:000001">
    <property type="entry name" value="UvrABC system protein C"/>
    <property type="match status" value="1"/>
</dbReference>
<dbReference type="Gene3D" id="1.10.150.20">
    <property type="entry name" value="5' to 3' exonuclease, C-terminal subdomain"/>
    <property type="match status" value="1"/>
</dbReference>
<dbReference type="Gene3D" id="3.40.1440.10">
    <property type="entry name" value="GIY-YIG endonuclease"/>
    <property type="match status" value="1"/>
</dbReference>
<dbReference type="Gene3D" id="4.10.860.10">
    <property type="entry name" value="UVR domain"/>
    <property type="match status" value="1"/>
</dbReference>
<dbReference type="Gene3D" id="3.30.420.340">
    <property type="entry name" value="UvrC, RNAse H endonuclease domain"/>
    <property type="match status" value="1"/>
</dbReference>
<dbReference type="HAMAP" id="MF_00203">
    <property type="entry name" value="UvrC"/>
    <property type="match status" value="1"/>
</dbReference>
<dbReference type="InterPro" id="IPR000305">
    <property type="entry name" value="GIY-YIG_endonuc"/>
</dbReference>
<dbReference type="InterPro" id="IPR035901">
    <property type="entry name" value="GIY-YIG_endonuc_sf"/>
</dbReference>
<dbReference type="InterPro" id="IPR047296">
    <property type="entry name" value="GIY-YIG_UvrC_Cho"/>
</dbReference>
<dbReference type="InterPro" id="IPR010994">
    <property type="entry name" value="RuvA_2-like"/>
</dbReference>
<dbReference type="InterPro" id="IPR001943">
    <property type="entry name" value="UVR_dom"/>
</dbReference>
<dbReference type="InterPro" id="IPR036876">
    <property type="entry name" value="UVR_dom_sf"/>
</dbReference>
<dbReference type="InterPro" id="IPR050066">
    <property type="entry name" value="UvrABC_protein_C"/>
</dbReference>
<dbReference type="InterPro" id="IPR004791">
    <property type="entry name" value="UvrC"/>
</dbReference>
<dbReference type="InterPro" id="IPR001162">
    <property type="entry name" value="UvrC_RNase_H_dom"/>
</dbReference>
<dbReference type="InterPro" id="IPR038476">
    <property type="entry name" value="UvrC_RNase_H_dom_sf"/>
</dbReference>
<dbReference type="NCBIfam" id="TIGR00194">
    <property type="entry name" value="uvrC"/>
    <property type="match status" value="1"/>
</dbReference>
<dbReference type="PANTHER" id="PTHR30562:SF1">
    <property type="entry name" value="UVRABC SYSTEM PROTEIN C"/>
    <property type="match status" value="1"/>
</dbReference>
<dbReference type="PANTHER" id="PTHR30562">
    <property type="entry name" value="UVRC/OXIDOREDUCTASE"/>
    <property type="match status" value="1"/>
</dbReference>
<dbReference type="Pfam" id="PF01541">
    <property type="entry name" value="GIY-YIG"/>
    <property type="match status" value="1"/>
</dbReference>
<dbReference type="Pfam" id="PF14520">
    <property type="entry name" value="HHH_5"/>
    <property type="match status" value="1"/>
</dbReference>
<dbReference type="Pfam" id="PF02151">
    <property type="entry name" value="UVR"/>
    <property type="match status" value="1"/>
</dbReference>
<dbReference type="Pfam" id="PF22920">
    <property type="entry name" value="UvrC_RNaseH"/>
    <property type="match status" value="1"/>
</dbReference>
<dbReference type="Pfam" id="PF08459">
    <property type="entry name" value="UvrC_RNaseH_dom"/>
    <property type="match status" value="1"/>
</dbReference>
<dbReference type="SMART" id="SM00465">
    <property type="entry name" value="GIYc"/>
    <property type="match status" value="1"/>
</dbReference>
<dbReference type="SUPFAM" id="SSF46600">
    <property type="entry name" value="C-terminal UvrC-binding domain of UvrB"/>
    <property type="match status" value="1"/>
</dbReference>
<dbReference type="SUPFAM" id="SSF82771">
    <property type="entry name" value="GIY-YIG endonuclease"/>
    <property type="match status" value="1"/>
</dbReference>
<dbReference type="SUPFAM" id="SSF47781">
    <property type="entry name" value="RuvA domain 2-like"/>
    <property type="match status" value="1"/>
</dbReference>
<dbReference type="PROSITE" id="PS50164">
    <property type="entry name" value="GIY_YIG"/>
    <property type="match status" value="1"/>
</dbReference>
<dbReference type="PROSITE" id="PS50151">
    <property type="entry name" value="UVR"/>
    <property type="match status" value="1"/>
</dbReference>
<dbReference type="PROSITE" id="PS50165">
    <property type="entry name" value="UVRC"/>
    <property type="match status" value="1"/>
</dbReference>
<accession>Q03K10</accession>
<protein>
    <recommendedName>
        <fullName evidence="1">UvrABC system protein C</fullName>
        <shortName evidence="1">Protein UvrC</shortName>
    </recommendedName>
    <alternativeName>
        <fullName evidence="1">Excinuclease ABC subunit C</fullName>
    </alternativeName>
</protein>
<keyword id="KW-0963">Cytoplasm</keyword>
<keyword id="KW-0227">DNA damage</keyword>
<keyword id="KW-0228">DNA excision</keyword>
<keyword id="KW-0234">DNA repair</keyword>
<keyword id="KW-0267">Excision nuclease</keyword>
<keyword id="KW-0742">SOS response</keyword>
<sequence>MNGLIKHKLELLPSNPGCYLHKDKFGNIIYVGKAKNLKNRVRSYFRGSHDTKTELLVSEIADFEFIVTESNIEALLLEINLIQENMPKFNIRLKDGKSYPFIKITKELYPRLLITRQVKKDGGLYFGPYPDSGAANEIKKLLDRIFPFKKCKNPANKVCFYYHIGQCNAHTICHTTEDYWQGLVEDVKNFLNGHDDKIVNQLKAKMKDMSDQMAFERAAEYRDLIEAVSTLRTKQRVIRQDMQDRDIFGYYVDKGWMCVQVFFVRQGKLIQRDVNMFPYYNDAEEDFLTYMGQFYLDSRHLKPKEIFIPGDIDQESVEALVGDEVKVFKPKRGEKKQLVNLATKNARVSLTQKFDLLEKDIAKTQGAIENLGKLMGIPTPVRIESFDNSNIMGTSPVSAMVVFENGKPNKKEYRKYKIKTVEGPDDYASMREVIRRRYSRVKRDGLTPPDLIIMDGGQGQVNVAKDVLRNELNLSIPVAGLQKNDKHQTNELLFGDPLRVIDLPRQSEEFFLLHRIQDEVHRFAITFHRQVRSKNSFSSKLDGVEGLGPKRKQKLLKNFKSMTAIQQASVEDIQALGIPKKVAQALLDKLSQDSH</sequence>
<organism>
    <name type="scientific">Streptococcus thermophilus (strain ATCC BAA-491 / LMD-9)</name>
    <dbReference type="NCBI Taxonomy" id="322159"/>
    <lineage>
        <taxon>Bacteria</taxon>
        <taxon>Bacillati</taxon>
        <taxon>Bacillota</taxon>
        <taxon>Bacilli</taxon>
        <taxon>Lactobacillales</taxon>
        <taxon>Streptococcaceae</taxon>
        <taxon>Streptococcus</taxon>
    </lineage>
</organism>
<comment type="function">
    <text evidence="1">The UvrABC repair system catalyzes the recognition and processing of DNA lesions. UvrC both incises the 5' and 3' sides of the lesion. The N-terminal half is responsible for the 3' incision and the C-terminal half is responsible for the 5' incision.</text>
</comment>
<comment type="subunit">
    <text evidence="1">Interacts with UvrB in an incision complex.</text>
</comment>
<comment type="subcellular location">
    <subcellularLocation>
        <location evidence="1">Cytoplasm</location>
    </subcellularLocation>
</comment>
<comment type="similarity">
    <text evidence="1">Belongs to the UvrC family.</text>
</comment>
<evidence type="ECO:0000255" key="1">
    <source>
        <dbReference type="HAMAP-Rule" id="MF_00203"/>
    </source>
</evidence>
<gene>
    <name evidence="1" type="primary">uvrC</name>
    <name type="ordered locus">STER_1280</name>
</gene>
<feature type="chain" id="PRO_1000077854" description="UvrABC system protein C">
    <location>
        <begin position="1"/>
        <end position="595"/>
    </location>
</feature>
<feature type="domain" description="GIY-YIG" evidence="1">
    <location>
        <begin position="14"/>
        <end position="91"/>
    </location>
</feature>
<feature type="domain" description="UVR" evidence="1">
    <location>
        <begin position="196"/>
        <end position="231"/>
    </location>
</feature>
<name>UVRC_STRTD</name>
<reference key="1">
    <citation type="journal article" date="2006" name="Proc. Natl. Acad. Sci. U.S.A.">
        <title>Comparative genomics of the lactic acid bacteria.</title>
        <authorList>
            <person name="Makarova K.S."/>
            <person name="Slesarev A."/>
            <person name="Wolf Y.I."/>
            <person name="Sorokin A."/>
            <person name="Mirkin B."/>
            <person name="Koonin E.V."/>
            <person name="Pavlov A."/>
            <person name="Pavlova N."/>
            <person name="Karamychev V."/>
            <person name="Polouchine N."/>
            <person name="Shakhova V."/>
            <person name="Grigoriev I."/>
            <person name="Lou Y."/>
            <person name="Rohksar D."/>
            <person name="Lucas S."/>
            <person name="Huang K."/>
            <person name="Goodstein D.M."/>
            <person name="Hawkins T."/>
            <person name="Plengvidhya V."/>
            <person name="Welker D."/>
            <person name="Hughes J."/>
            <person name="Goh Y."/>
            <person name="Benson A."/>
            <person name="Baldwin K."/>
            <person name="Lee J.-H."/>
            <person name="Diaz-Muniz I."/>
            <person name="Dosti B."/>
            <person name="Smeianov V."/>
            <person name="Wechter W."/>
            <person name="Barabote R."/>
            <person name="Lorca G."/>
            <person name="Altermann E."/>
            <person name="Barrangou R."/>
            <person name="Ganesan B."/>
            <person name="Xie Y."/>
            <person name="Rawsthorne H."/>
            <person name="Tamir D."/>
            <person name="Parker C."/>
            <person name="Breidt F."/>
            <person name="Broadbent J.R."/>
            <person name="Hutkins R."/>
            <person name="O'Sullivan D."/>
            <person name="Steele J."/>
            <person name="Unlu G."/>
            <person name="Saier M.H. Jr."/>
            <person name="Klaenhammer T."/>
            <person name="Richardson P."/>
            <person name="Kozyavkin S."/>
            <person name="Weimer B.C."/>
            <person name="Mills D.A."/>
        </authorList>
    </citation>
    <scope>NUCLEOTIDE SEQUENCE [LARGE SCALE GENOMIC DNA]</scope>
    <source>
        <strain>ATCC BAA-491 / LMD-9</strain>
    </source>
</reference>
<proteinExistence type="inferred from homology"/>